<organism>
    <name type="scientific">Streptococcus suis (strain 98HAH33)</name>
    <dbReference type="NCBI Taxonomy" id="391296"/>
    <lineage>
        <taxon>Bacteria</taxon>
        <taxon>Bacillati</taxon>
        <taxon>Bacillota</taxon>
        <taxon>Bacilli</taxon>
        <taxon>Lactobacillales</taxon>
        <taxon>Streptococcaceae</taxon>
        <taxon>Streptococcus</taxon>
    </lineage>
</organism>
<sequence>MKISEAEVRHVAKLSKLEFSDQETAEFATSLSKIVDMVELLNEVDTTGVAVTTTMADRKNVLRADIAQKGESREELFKNVPESQDNFIKVPAILDGGGDA</sequence>
<reference key="1">
    <citation type="journal article" date="2007" name="PLoS ONE">
        <title>A glimpse of streptococcal toxic shock syndrome from comparative genomics of S. suis 2 Chinese isolates.</title>
        <authorList>
            <person name="Chen C."/>
            <person name="Tang J."/>
            <person name="Dong W."/>
            <person name="Wang C."/>
            <person name="Feng Y."/>
            <person name="Wang J."/>
            <person name="Zheng F."/>
            <person name="Pan X."/>
            <person name="Liu D."/>
            <person name="Li M."/>
            <person name="Song Y."/>
            <person name="Zhu X."/>
            <person name="Sun H."/>
            <person name="Feng T."/>
            <person name="Guo Z."/>
            <person name="Ju A."/>
            <person name="Ge J."/>
            <person name="Dong Y."/>
            <person name="Sun W."/>
            <person name="Jiang Y."/>
            <person name="Wang J."/>
            <person name="Yan J."/>
            <person name="Yang H."/>
            <person name="Wang X."/>
            <person name="Gao G.F."/>
            <person name="Yang R."/>
            <person name="Wang J."/>
            <person name="Yu J."/>
        </authorList>
    </citation>
    <scope>NUCLEOTIDE SEQUENCE [LARGE SCALE GENOMIC DNA]</scope>
    <source>
        <strain>98HAH33</strain>
    </source>
</reference>
<comment type="function">
    <text evidence="1">Allows the formation of correctly charged Asn-tRNA(Asn) or Gln-tRNA(Gln) through the transamidation of misacylated Asp-tRNA(Asn) or Glu-tRNA(Gln) in organisms which lack either or both of asparaginyl-tRNA or glutaminyl-tRNA synthetases. The reaction takes place in the presence of glutamine and ATP through an activated phospho-Asp-tRNA(Asn) or phospho-Glu-tRNA(Gln).</text>
</comment>
<comment type="catalytic activity">
    <reaction evidence="1">
        <text>L-glutamyl-tRNA(Gln) + L-glutamine + ATP + H2O = L-glutaminyl-tRNA(Gln) + L-glutamate + ADP + phosphate + H(+)</text>
        <dbReference type="Rhea" id="RHEA:17521"/>
        <dbReference type="Rhea" id="RHEA-COMP:9681"/>
        <dbReference type="Rhea" id="RHEA-COMP:9684"/>
        <dbReference type="ChEBI" id="CHEBI:15377"/>
        <dbReference type="ChEBI" id="CHEBI:15378"/>
        <dbReference type="ChEBI" id="CHEBI:29985"/>
        <dbReference type="ChEBI" id="CHEBI:30616"/>
        <dbReference type="ChEBI" id="CHEBI:43474"/>
        <dbReference type="ChEBI" id="CHEBI:58359"/>
        <dbReference type="ChEBI" id="CHEBI:78520"/>
        <dbReference type="ChEBI" id="CHEBI:78521"/>
        <dbReference type="ChEBI" id="CHEBI:456216"/>
    </reaction>
</comment>
<comment type="catalytic activity">
    <reaction evidence="1">
        <text>L-aspartyl-tRNA(Asn) + L-glutamine + ATP + H2O = L-asparaginyl-tRNA(Asn) + L-glutamate + ADP + phosphate + 2 H(+)</text>
        <dbReference type="Rhea" id="RHEA:14513"/>
        <dbReference type="Rhea" id="RHEA-COMP:9674"/>
        <dbReference type="Rhea" id="RHEA-COMP:9677"/>
        <dbReference type="ChEBI" id="CHEBI:15377"/>
        <dbReference type="ChEBI" id="CHEBI:15378"/>
        <dbReference type="ChEBI" id="CHEBI:29985"/>
        <dbReference type="ChEBI" id="CHEBI:30616"/>
        <dbReference type="ChEBI" id="CHEBI:43474"/>
        <dbReference type="ChEBI" id="CHEBI:58359"/>
        <dbReference type="ChEBI" id="CHEBI:78515"/>
        <dbReference type="ChEBI" id="CHEBI:78516"/>
        <dbReference type="ChEBI" id="CHEBI:456216"/>
    </reaction>
</comment>
<comment type="subunit">
    <text evidence="1">Heterotrimer of A, B and C subunits.</text>
</comment>
<comment type="similarity">
    <text evidence="1">Belongs to the GatC family.</text>
</comment>
<accession>A4VZG4</accession>
<name>GATC_STRS2</name>
<feature type="chain" id="PRO_1000016223" description="Aspartyl/glutamyl-tRNA(Asn/Gln) amidotransferase subunit C">
    <location>
        <begin position="1"/>
        <end position="100"/>
    </location>
</feature>
<dbReference type="EC" id="6.3.5.-" evidence="1"/>
<dbReference type="EMBL" id="CP000408">
    <property type="protein sequence ID" value="ABP91503.1"/>
    <property type="molecule type" value="Genomic_DNA"/>
</dbReference>
<dbReference type="SMR" id="A4VZG4"/>
<dbReference type="KEGG" id="ssv:SSU98_0345"/>
<dbReference type="HOGENOM" id="CLU_105899_1_2_9"/>
<dbReference type="GO" id="GO:0050566">
    <property type="term" value="F:asparaginyl-tRNA synthase (glutamine-hydrolyzing) activity"/>
    <property type="evidence" value="ECO:0007669"/>
    <property type="project" value="RHEA"/>
</dbReference>
<dbReference type="GO" id="GO:0005524">
    <property type="term" value="F:ATP binding"/>
    <property type="evidence" value="ECO:0007669"/>
    <property type="project" value="UniProtKB-KW"/>
</dbReference>
<dbReference type="GO" id="GO:0050567">
    <property type="term" value="F:glutaminyl-tRNA synthase (glutamine-hydrolyzing) activity"/>
    <property type="evidence" value="ECO:0007669"/>
    <property type="project" value="UniProtKB-UniRule"/>
</dbReference>
<dbReference type="GO" id="GO:0070681">
    <property type="term" value="P:glutaminyl-tRNAGln biosynthesis via transamidation"/>
    <property type="evidence" value="ECO:0007669"/>
    <property type="project" value="TreeGrafter"/>
</dbReference>
<dbReference type="GO" id="GO:0006450">
    <property type="term" value="P:regulation of translational fidelity"/>
    <property type="evidence" value="ECO:0007669"/>
    <property type="project" value="InterPro"/>
</dbReference>
<dbReference type="GO" id="GO:0006412">
    <property type="term" value="P:translation"/>
    <property type="evidence" value="ECO:0007669"/>
    <property type="project" value="UniProtKB-UniRule"/>
</dbReference>
<dbReference type="Gene3D" id="1.10.20.60">
    <property type="entry name" value="Glu-tRNAGln amidotransferase C subunit, N-terminal domain"/>
    <property type="match status" value="1"/>
</dbReference>
<dbReference type="HAMAP" id="MF_00122">
    <property type="entry name" value="GatC"/>
    <property type="match status" value="1"/>
</dbReference>
<dbReference type="InterPro" id="IPR036113">
    <property type="entry name" value="Asp/Glu-ADT_sf_sub_c"/>
</dbReference>
<dbReference type="InterPro" id="IPR003837">
    <property type="entry name" value="GatC"/>
</dbReference>
<dbReference type="NCBIfam" id="TIGR00135">
    <property type="entry name" value="gatC"/>
    <property type="match status" value="1"/>
</dbReference>
<dbReference type="PANTHER" id="PTHR15004">
    <property type="entry name" value="GLUTAMYL-TRNA(GLN) AMIDOTRANSFERASE SUBUNIT C, MITOCHONDRIAL"/>
    <property type="match status" value="1"/>
</dbReference>
<dbReference type="PANTHER" id="PTHR15004:SF0">
    <property type="entry name" value="GLUTAMYL-TRNA(GLN) AMIDOTRANSFERASE SUBUNIT C, MITOCHONDRIAL"/>
    <property type="match status" value="1"/>
</dbReference>
<dbReference type="Pfam" id="PF02686">
    <property type="entry name" value="GatC"/>
    <property type="match status" value="1"/>
</dbReference>
<dbReference type="SUPFAM" id="SSF141000">
    <property type="entry name" value="Glu-tRNAGln amidotransferase C subunit"/>
    <property type="match status" value="1"/>
</dbReference>
<proteinExistence type="inferred from homology"/>
<evidence type="ECO:0000255" key="1">
    <source>
        <dbReference type="HAMAP-Rule" id="MF_00122"/>
    </source>
</evidence>
<gene>
    <name evidence="1" type="primary">gatC</name>
    <name type="ordered locus">SSU98_0345</name>
</gene>
<keyword id="KW-0067">ATP-binding</keyword>
<keyword id="KW-0436">Ligase</keyword>
<keyword id="KW-0547">Nucleotide-binding</keyword>
<keyword id="KW-0648">Protein biosynthesis</keyword>
<protein>
    <recommendedName>
        <fullName evidence="1">Aspartyl/glutamyl-tRNA(Asn/Gln) amidotransferase subunit C</fullName>
        <shortName evidence="1">Asp/Glu-ADT subunit C</shortName>
        <ecNumber evidence="1">6.3.5.-</ecNumber>
    </recommendedName>
</protein>